<proteinExistence type="inferred from homology"/>
<comment type="function">
    <text evidence="1">One of the essential components for the initiation of protein synthesis. Stabilizes the binding of IF-2 and IF-3 on the 30S subunit to which N-formylmethionyl-tRNA(fMet) subsequently binds. Helps modulate mRNA selection, yielding the 30S pre-initiation complex (PIC). Upon addition of the 50S ribosomal subunit IF-1, IF-2 and IF-3 are released leaving the mature 70S translation initiation complex.</text>
</comment>
<comment type="subunit">
    <text evidence="1">Component of the 30S ribosomal translation pre-initiation complex which assembles on the 30S ribosome in the order IF-2 and IF-3, IF-1 and N-formylmethionyl-tRNA(fMet); mRNA recruitment can occur at any time during PIC assembly.</text>
</comment>
<comment type="subcellular location">
    <subcellularLocation>
        <location evidence="1">Cytoplasm</location>
    </subcellularLocation>
</comment>
<comment type="similarity">
    <text evidence="1">Belongs to the IF-1 family.</text>
</comment>
<sequence>MAKEEAIEVEGIVKESLPNTMFRVELKNGHVILAHLSGKMRKHYIKIVPGDTVKVALSPYDLTRGRIIFRER</sequence>
<dbReference type="EMBL" id="AE017226">
    <property type="protein sequence ID" value="AAS12607.1"/>
    <property type="molecule type" value="Genomic_DNA"/>
</dbReference>
<dbReference type="RefSeq" id="NP_972688.1">
    <property type="nucleotide sequence ID" value="NC_002967.9"/>
</dbReference>
<dbReference type="RefSeq" id="WP_002668257.1">
    <property type="nucleotide sequence ID" value="NC_002967.9"/>
</dbReference>
<dbReference type="SMR" id="P61696"/>
<dbReference type="STRING" id="243275.TDE_2087"/>
<dbReference type="PaxDb" id="243275-TDE_2087"/>
<dbReference type="GeneID" id="2740326"/>
<dbReference type="KEGG" id="tde:TDE_2087"/>
<dbReference type="PATRIC" id="fig|243275.7.peg.1971"/>
<dbReference type="eggNOG" id="COG0361">
    <property type="taxonomic scope" value="Bacteria"/>
</dbReference>
<dbReference type="HOGENOM" id="CLU_151267_1_0_12"/>
<dbReference type="OrthoDB" id="9803250at2"/>
<dbReference type="Proteomes" id="UP000008212">
    <property type="component" value="Chromosome"/>
</dbReference>
<dbReference type="GO" id="GO:0005829">
    <property type="term" value="C:cytosol"/>
    <property type="evidence" value="ECO:0007669"/>
    <property type="project" value="TreeGrafter"/>
</dbReference>
<dbReference type="GO" id="GO:0043022">
    <property type="term" value="F:ribosome binding"/>
    <property type="evidence" value="ECO:0007669"/>
    <property type="project" value="UniProtKB-UniRule"/>
</dbReference>
<dbReference type="GO" id="GO:0019843">
    <property type="term" value="F:rRNA binding"/>
    <property type="evidence" value="ECO:0007669"/>
    <property type="project" value="UniProtKB-UniRule"/>
</dbReference>
<dbReference type="GO" id="GO:0003743">
    <property type="term" value="F:translation initiation factor activity"/>
    <property type="evidence" value="ECO:0007669"/>
    <property type="project" value="UniProtKB-UniRule"/>
</dbReference>
<dbReference type="CDD" id="cd04451">
    <property type="entry name" value="S1_IF1"/>
    <property type="match status" value="1"/>
</dbReference>
<dbReference type="FunFam" id="2.40.50.140:FF:000002">
    <property type="entry name" value="Translation initiation factor IF-1"/>
    <property type="match status" value="1"/>
</dbReference>
<dbReference type="Gene3D" id="2.40.50.140">
    <property type="entry name" value="Nucleic acid-binding proteins"/>
    <property type="match status" value="1"/>
</dbReference>
<dbReference type="HAMAP" id="MF_00075">
    <property type="entry name" value="IF_1"/>
    <property type="match status" value="1"/>
</dbReference>
<dbReference type="InterPro" id="IPR012340">
    <property type="entry name" value="NA-bd_OB-fold"/>
</dbReference>
<dbReference type="InterPro" id="IPR006196">
    <property type="entry name" value="RNA-binding_domain_S1_IF1"/>
</dbReference>
<dbReference type="InterPro" id="IPR003029">
    <property type="entry name" value="S1_domain"/>
</dbReference>
<dbReference type="InterPro" id="IPR004368">
    <property type="entry name" value="TIF_IF1"/>
</dbReference>
<dbReference type="NCBIfam" id="TIGR00008">
    <property type="entry name" value="infA"/>
    <property type="match status" value="1"/>
</dbReference>
<dbReference type="PANTHER" id="PTHR33370">
    <property type="entry name" value="TRANSLATION INITIATION FACTOR IF-1, CHLOROPLASTIC"/>
    <property type="match status" value="1"/>
</dbReference>
<dbReference type="PANTHER" id="PTHR33370:SF1">
    <property type="entry name" value="TRANSLATION INITIATION FACTOR IF-1, CHLOROPLASTIC"/>
    <property type="match status" value="1"/>
</dbReference>
<dbReference type="Pfam" id="PF01176">
    <property type="entry name" value="eIF-1a"/>
    <property type="match status" value="1"/>
</dbReference>
<dbReference type="SMART" id="SM00316">
    <property type="entry name" value="S1"/>
    <property type="match status" value="1"/>
</dbReference>
<dbReference type="SUPFAM" id="SSF50249">
    <property type="entry name" value="Nucleic acid-binding proteins"/>
    <property type="match status" value="1"/>
</dbReference>
<dbReference type="PROSITE" id="PS50832">
    <property type="entry name" value="S1_IF1_TYPE"/>
    <property type="match status" value="1"/>
</dbReference>
<evidence type="ECO:0000255" key="1">
    <source>
        <dbReference type="HAMAP-Rule" id="MF_00075"/>
    </source>
</evidence>
<name>IF1_TREDE</name>
<reference key="1">
    <citation type="journal article" date="2004" name="Proc. Natl. Acad. Sci. U.S.A.">
        <title>Comparison of the genome of the oral pathogen Treponema denticola with other spirochete genomes.</title>
        <authorList>
            <person name="Seshadri R."/>
            <person name="Myers G.S.A."/>
            <person name="Tettelin H."/>
            <person name="Eisen J.A."/>
            <person name="Heidelberg J.F."/>
            <person name="Dodson R.J."/>
            <person name="Davidsen T.M."/>
            <person name="DeBoy R.T."/>
            <person name="Fouts D.E."/>
            <person name="Haft D.H."/>
            <person name="Selengut J."/>
            <person name="Ren Q."/>
            <person name="Brinkac L.M."/>
            <person name="Madupu R."/>
            <person name="Kolonay J.F."/>
            <person name="Durkin S.A."/>
            <person name="Daugherty S.C."/>
            <person name="Shetty J."/>
            <person name="Shvartsbeyn A."/>
            <person name="Gebregeorgis E."/>
            <person name="Geer K."/>
            <person name="Tsegaye G."/>
            <person name="Malek J.A."/>
            <person name="Ayodeji B."/>
            <person name="Shatsman S."/>
            <person name="McLeod M.P."/>
            <person name="Smajs D."/>
            <person name="Howell J.K."/>
            <person name="Pal S."/>
            <person name="Amin A."/>
            <person name="Vashisth P."/>
            <person name="McNeill T.Z."/>
            <person name="Xiang Q."/>
            <person name="Sodergren E."/>
            <person name="Baca E."/>
            <person name="Weinstock G.M."/>
            <person name="Norris S.J."/>
            <person name="Fraser C.M."/>
            <person name="Paulsen I.T."/>
        </authorList>
    </citation>
    <scope>NUCLEOTIDE SEQUENCE [LARGE SCALE GENOMIC DNA]</scope>
    <source>
        <strain>ATCC 35405 / DSM 14222 / CIP 103919 / JCM 8153 / KCTC 15104</strain>
    </source>
</reference>
<gene>
    <name evidence="1" type="primary">infA</name>
    <name type="ordered locus">TDE_2087</name>
</gene>
<accession>P61696</accession>
<protein>
    <recommendedName>
        <fullName evidence="1">Translation initiation factor IF-1</fullName>
    </recommendedName>
</protein>
<keyword id="KW-0963">Cytoplasm</keyword>
<keyword id="KW-0396">Initiation factor</keyword>
<keyword id="KW-0648">Protein biosynthesis</keyword>
<keyword id="KW-1185">Reference proteome</keyword>
<keyword id="KW-0694">RNA-binding</keyword>
<keyword id="KW-0699">rRNA-binding</keyword>
<organism>
    <name type="scientific">Treponema denticola (strain ATCC 35405 / DSM 14222 / CIP 103919 / JCM 8153 / KCTC 15104)</name>
    <dbReference type="NCBI Taxonomy" id="243275"/>
    <lineage>
        <taxon>Bacteria</taxon>
        <taxon>Pseudomonadati</taxon>
        <taxon>Spirochaetota</taxon>
        <taxon>Spirochaetia</taxon>
        <taxon>Spirochaetales</taxon>
        <taxon>Treponemataceae</taxon>
        <taxon>Treponema</taxon>
    </lineage>
</organism>
<feature type="chain" id="PRO_0000095896" description="Translation initiation factor IF-1">
    <location>
        <begin position="1"/>
        <end position="72"/>
    </location>
</feature>
<feature type="domain" description="S1-like" evidence="1">
    <location>
        <begin position="1"/>
        <end position="72"/>
    </location>
</feature>